<feature type="chain" id="PRO_0000383601" description="Probable basic-leucine zipper transcription factor P">
    <location>
        <begin position="1"/>
        <end position="831"/>
    </location>
</feature>
<feature type="domain" description="bZIP" evidence="3">
    <location>
        <begin position="151"/>
        <end position="214"/>
    </location>
</feature>
<feature type="region of interest" description="Disordered" evidence="4">
    <location>
        <begin position="1"/>
        <end position="33"/>
    </location>
</feature>
<feature type="region of interest" description="Disordered" evidence="4">
    <location>
        <begin position="54"/>
        <end position="166"/>
    </location>
</feature>
<feature type="region of interest" description="Basic motif" evidence="3">
    <location>
        <begin position="153"/>
        <end position="173"/>
    </location>
</feature>
<feature type="region of interest" description="Leucine-zipper" evidence="3">
    <location>
        <begin position="176"/>
        <end position="183"/>
    </location>
</feature>
<feature type="region of interest" description="Disordered" evidence="4">
    <location>
        <begin position="469"/>
        <end position="510"/>
    </location>
</feature>
<feature type="region of interest" description="Disordered" evidence="4">
    <location>
        <begin position="658"/>
        <end position="697"/>
    </location>
</feature>
<feature type="region of interest" description="Disordered" evidence="4">
    <location>
        <begin position="715"/>
        <end position="771"/>
    </location>
</feature>
<feature type="region of interest" description="Disordered" evidence="4">
    <location>
        <begin position="787"/>
        <end position="810"/>
    </location>
</feature>
<feature type="coiled-coil region" evidence="2">
    <location>
        <begin position="101"/>
        <end position="141"/>
    </location>
</feature>
<feature type="coiled-coil region" evidence="2">
    <location>
        <begin position="601"/>
        <end position="664"/>
    </location>
</feature>
<feature type="compositionally biased region" description="Low complexity" evidence="4">
    <location>
        <begin position="54"/>
        <end position="85"/>
    </location>
</feature>
<feature type="compositionally biased region" description="Basic and acidic residues" evidence="4">
    <location>
        <begin position="87"/>
        <end position="96"/>
    </location>
</feature>
<feature type="compositionally biased region" description="Low complexity" evidence="4">
    <location>
        <begin position="97"/>
        <end position="129"/>
    </location>
</feature>
<feature type="compositionally biased region" description="Acidic residues" evidence="4">
    <location>
        <begin position="130"/>
        <end position="143"/>
    </location>
</feature>
<feature type="compositionally biased region" description="Basic and acidic residues" evidence="4">
    <location>
        <begin position="144"/>
        <end position="154"/>
    </location>
</feature>
<feature type="compositionally biased region" description="Low complexity" evidence="4">
    <location>
        <begin position="469"/>
        <end position="484"/>
    </location>
</feature>
<feature type="compositionally biased region" description="Low complexity" evidence="4">
    <location>
        <begin position="497"/>
        <end position="510"/>
    </location>
</feature>
<feature type="compositionally biased region" description="Low complexity" evidence="4">
    <location>
        <begin position="674"/>
        <end position="695"/>
    </location>
</feature>
<feature type="compositionally biased region" description="Low complexity" evidence="4">
    <location>
        <begin position="720"/>
        <end position="750"/>
    </location>
</feature>
<feature type="compositionally biased region" description="Low complexity" evidence="4">
    <location>
        <begin position="787"/>
        <end position="800"/>
    </location>
</feature>
<proteinExistence type="inferred from homology"/>
<comment type="function">
    <text evidence="1">Probable transcriptional regulator.</text>
</comment>
<comment type="subcellular location">
    <subcellularLocation>
        <location evidence="3">Nucleus</location>
    </subcellularLocation>
</comment>
<comment type="similarity">
    <text evidence="5">Belongs to the bZIP family.</text>
</comment>
<dbReference type="EMBL" id="AAFI02000162">
    <property type="protein sequence ID" value="EAL62278.1"/>
    <property type="molecule type" value="Genomic_DNA"/>
</dbReference>
<dbReference type="RefSeq" id="XP_635789.1">
    <property type="nucleotide sequence ID" value="XM_630697.1"/>
</dbReference>
<dbReference type="SMR" id="Q54G94"/>
<dbReference type="FunCoup" id="Q54G94">
    <property type="interactions" value="388"/>
</dbReference>
<dbReference type="STRING" id="44689.Q54G94"/>
<dbReference type="PaxDb" id="44689-DDB0220088"/>
<dbReference type="EnsemblProtists" id="EAL62278">
    <property type="protein sequence ID" value="EAL62278"/>
    <property type="gene ID" value="DDB_G0290303"/>
</dbReference>
<dbReference type="GeneID" id="8627595"/>
<dbReference type="KEGG" id="ddi:DDB_G0290303"/>
<dbReference type="dictyBase" id="DDB_G0290303">
    <property type="gene designation" value="bzpP"/>
</dbReference>
<dbReference type="VEuPathDB" id="AmoebaDB:DDB_G0290303"/>
<dbReference type="HOGENOM" id="CLU_341442_0_0_1"/>
<dbReference type="InParanoid" id="Q54G94"/>
<dbReference type="PRO" id="PR:Q54G94"/>
<dbReference type="Proteomes" id="UP000002195">
    <property type="component" value="Chromosome 5"/>
</dbReference>
<dbReference type="GO" id="GO:0005634">
    <property type="term" value="C:nucleus"/>
    <property type="evidence" value="ECO:0000318"/>
    <property type="project" value="GO_Central"/>
</dbReference>
<dbReference type="GO" id="GO:0003700">
    <property type="term" value="F:DNA-binding transcription factor activity"/>
    <property type="evidence" value="ECO:0007669"/>
    <property type="project" value="InterPro"/>
</dbReference>
<dbReference type="GO" id="GO:0043565">
    <property type="term" value="F:sequence-specific DNA binding"/>
    <property type="evidence" value="ECO:0000318"/>
    <property type="project" value="GO_Central"/>
</dbReference>
<dbReference type="GO" id="GO:0010468">
    <property type="term" value="P:regulation of gene expression"/>
    <property type="evidence" value="ECO:0000318"/>
    <property type="project" value="GO_Central"/>
</dbReference>
<dbReference type="CDD" id="cd14686">
    <property type="entry name" value="bZIP"/>
    <property type="match status" value="1"/>
</dbReference>
<dbReference type="Gene3D" id="1.20.5.170">
    <property type="match status" value="1"/>
</dbReference>
<dbReference type="InterPro" id="IPR004827">
    <property type="entry name" value="bZIP"/>
</dbReference>
<dbReference type="InterPro" id="IPR046347">
    <property type="entry name" value="bZIP_sf"/>
</dbReference>
<dbReference type="PANTHER" id="PTHR14312:SF7">
    <property type="entry name" value="BASIC-LEUCINE ZIPPER TRANSCRIPTION FACTOR B-RELATED"/>
    <property type="match status" value="1"/>
</dbReference>
<dbReference type="PANTHER" id="PTHR14312">
    <property type="entry name" value="CREB/ATF BZIP TRANSCRIPTION FACTOR"/>
    <property type="match status" value="1"/>
</dbReference>
<dbReference type="Pfam" id="PF07716">
    <property type="entry name" value="bZIP_2"/>
    <property type="match status" value="1"/>
</dbReference>
<dbReference type="SMART" id="SM00338">
    <property type="entry name" value="BRLZ"/>
    <property type="match status" value="1"/>
</dbReference>
<dbReference type="SUPFAM" id="SSF57959">
    <property type="entry name" value="Leucine zipper domain"/>
    <property type="match status" value="1"/>
</dbReference>
<dbReference type="PROSITE" id="PS50217">
    <property type="entry name" value="BZIP"/>
    <property type="match status" value="1"/>
</dbReference>
<evidence type="ECO:0000250" key="1"/>
<evidence type="ECO:0000255" key="2"/>
<evidence type="ECO:0000255" key="3">
    <source>
        <dbReference type="PROSITE-ProRule" id="PRU00978"/>
    </source>
</evidence>
<evidence type="ECO:0000256" key="4">
    <source>
        <dbReference type="SAM" id="MobiDB-lite"/>
    </source>
</evidence>
<evidence type="ECO:0000305" key="5"/>
<name>BZPP_DICDI</name>
<reference key="1">
    <citation type="journal article" date="2005" name="Nature">
        <title>The genome of the social amoeba Dictyostelium discoideum.</title>
        <authorList>
            <person name="Eichinger L."/>
            <person name="Pachebat J.A."/>
            <person name="Gloeckner G."/>
            <person name="Rajandream M.A."/>
            <person name="Sucgang R."/>
            <person name="Berriman M."/>
            <person name="Song J."/>
            <person name="Olsen R."/>
            <person name="Szafranski K."/>
            <person name="Xu Q."/>
            <person name="Tunggal B."/>
            <person name="Kummerfeld S."/>
            <person name="Madera M."/>
            <person name="Konfortov B.A."/>
            <person name="Rivero F."/>
            <person name="Bankier A.T."/>
            <person name="Lehmann R."/>
            <person name="Hamlin N."/>
            <person name="Davies R."/>
            <person name="Gaudet P."/>
            <person name="Fey P."/>
            <person name="Pilcher K."/>
            <person name="Chen G."/>
            <person name="Saunders D."/>
            <person name="Sodergren E.J."/>
            <person name="Davis P."/>
            <person name="Kerhornou A."/>
            <person name="Nie X."/>
            <person name="Hall N."/>
            <person name="Anjard C."/>
            <person name="Hemphill L."/>
            <person name="Bason N."/>
            <person name="Farbrother P."/>
            <person name="Desany B."/>
            <person name="Just E."/>
            <person name="Morio T."/>
            <person name="Rost R."/>
            <person name="Churcher C.M."/>
            <person name="Cooper J."/>
            <person name="Haydock S."/>
            <person name="van Driessche N."/>
            <person name="Cronin A."/>
            <person name="Goodhead I."/>
            <person name="Muzny D.M."/>
            <person name="Mourier T."/>
            <person name="Pain A."/>
            <person name="Lu M."/>
            <person name="Harper D."/>
            <person name="Lindsay R."/>
            <person name="Hauser H."/>
            <person name="James K.D."/>
            <person name="Quiles M."/>
            <person name="Madan Babu M."/>
            <person name="Saito T."/>
            <person name="Buchrieser C."/>
            <person name="Wardroper A."/>
            <person name="Felder M."/>
            <person name="Thangavelu M."/>
            <person name="Johnson D."/>
            <person name="Knights A."/>
            <person name="Loulseged H."/>
            <person name="Mungall K.L."/>
            <person name="Oliver K."/>
            <person name="Price C."/>
            <person name="Quail M.A."/>
            <person name="Urushihara H."/>
            <person name="Hernandez J."/>
            <person name="Rabbinowitsch E."/>
            <person name="Steffen D."/>
            <person name="Sanders M."/>
            <person name="Ma J."/>
            <person name="Kohara Y."/>
            <person name="Sharp S."/>
            <person name="Simmonds M.N."/>
            <person name="Spiegler S."/>
            <person name="Tivey A."/>
            <person name="Sugano S."/>
            <person name="White B."/>
            <person name="Walker D."/>
            <person name="Woodward J.R."/>
            <person name="Winckler T."/>
            <person name="Tanaka Y."/>
            <person name="Shaulsky G."/>
            <person name="Schleicher M."/>
            <person name="Weinstock G.M."/>
            <person name="Rosenthal A."/>
            <person name="Cox E.C."/>
            <person name="Chisholm R.L."/>
            <person name="Gibbs R.A."/>
            <person name="Loomis W.F."/>
            <person name="Platzer M."/>
            <person name="Kay R.R."/>
            <person name="Williams J.G."/>
            <person name="Dear P.H."/>
            <person name="Noegel A.A."/>
            <person name="Barrell B.G."/>
            <person name="Kuspa A."/>
        </authorList>
    </citation>
    <scope>NUCLEOTIDE SEQUENCE [LARGE SCALE GENOMIC DNA]</scope>
    <source>
        <strain>AX4</strain>
    </source>
</reference>
<reference key="2">
    <citation type="journal article" date="2006" name="Development">
        <title>bZIP transcription factor interactions regulate DIF responses in Dictyostelium.</title>
        <authorList>
            <person name="Huang E."/>
            <person name="Blagg S.L."/>
            <person name="Keller T."/>
            <person name="Katoh M."/>
            <person name="Shaulsky G."/>
            <person name="Thompson C.R.L."/>
        </authorList>
    </citation>
    <scope>IDENTIFICATION</scope>
</reference>
<protein>
    <recommendedName>
        <fullName>Probable basic-leucine zipper transcription factor P</fullName>
    </recommendedName>
</protein>
<accession>Q54G94</accession>
<keyword id="KW-0175">Coiled coil</keyword>
<keyword id="KW-0238">DNA-binding</keyword>
<keyword id="KW-0539">Nucleus</keyword>
<keyword id="KW-1185">Reference proteome</keyword>
<keyword id="KW-0804">Transcription</keyword>
<keyword id="KW-0805">Transcription regulation</keyword>
<sequence length="831" mass="94391">MNHRIEDITSNPSSPSPNSPFSSPQVSLQPSIIQNGLNSNNSLLNGNNFNLNGNITSSPSTSSSPPISTTTTTTTTTTTTATAKKTNSKEKKKTTNKDNNNNNNNNNSNNQQQQQQQQQQQQQQQQQQQYEEEDDDEEDEGGDDNTKVGKGEKMKARRTNQNIASRNYRQRKKVYIKEMEDKINSLTLENDSLKKDLYKIGNNPLELLKFSQEVVFLMTQIRRLVFQIDQALRNSEPDSSIKSLLNTWQSTMDQASSINEREIERFVHPYTQAKLTVMGYKPHTNPWTDFIKTPGQEDWWTKYAEKANLSSDQLEQINNLWLRFDEEERVLQKELTDLDEYIKKFFLTKIIIMPDTEKLNDIISSCLPIPENHDGDILQTSEVLEFIYNLEKLKQKFIKVQRLTWDTSKQMSKYLTVRQEAFLLVLVHSNTKYIHTNMDMTNNLWNQLNHSALSKTPSTYLLGGVHSSSSSSSSSSSSMSSSTSRILNNHGIPTPLSSSNSSPSSLSASSSIGESIHSYSQLPNVVQPIQTQPSSMFTPLPGAKPLKNQQPIDDLFFGTIPLSQVPLSFQQNSNMALFSNYRNFTQQQAQQQQQQQQQQHAQQHAQQQAQQQAHLQAQIQAQIMQQAQQIHQVQQAQQASQQAAQQAAQQAAAQQAAQQQAAQQQSPIQTQLSPPQHITPQHTPQQHIQQQQQHQNYQGTEPHLLGEFMFFNSIDATNSNNNNNNNNNNNNNNNNNNNNNNNNNNNNNNNSTPIDQLNEYRPDYNNNNTNKILPNIIQSLSASSNNSLFSHQHQQQNSQSPTLPPSQNDSVQFHFYQPIHQNNQNNQNHNN</sequence>
<organism>
    <name type="scientific">Dictyostelium discoideum</name>
    <name type="common">Social amoeba</name>
    <dbReference type="NCBI Taxonomy" id="44689"/>
    <lineage>
        <taxon>Eukaryota</taxon>
        <taxon>Amoebozoa</taxon>
        <taxon>Evosea</taxon>
        <taxon>Eumycetozoa</taxon>
        <taxon>Dictyostelia</taxon>
        <taxon>Dictyosteliales</taxon>
        <taxon>Dictyosteliaceae</taxon>
        <taxon>Dictyostelium</taxon>
    </lineage>
</organism>
<gene>
    <name type="primary">bzpP</name>
    <name type="ORF">DDB_G0290303</name>
</gene>